<protein>
    <recommendedName>
        <fullName>Myelin protein P0</fullName>
    </recommendedName>
    <alternativeName>
        <fullName>Myelin peripheral protein</fullName>
        <shortName>MPP</shortName>
    </alternativeName>
    <alternativeName>
        <fullName>Myelin protein zero</fullName>
    </alternativeName>
</protein>
<dbReference type="EMBL" id="X16714">
    <property type="protein sequence ID" value="CAB37865.1"/>
    <property type="molecule type" value="mRNA"/>
</dbReference>
<dbReference type="PIR" id="A32999">
    <property type="entry name" value="A32999"/>
</dbReference>
<dbReference type="SMR" id="P20938"/>
<dbReference type="GlyCosmos" id="P20938">
    <property type="glycosylation" value="1 site, No reported glycans"/>
</dbReference>
<dbReference type="GO" id="GO:0005886">
    <property type="term" value="C:plasma membrane"/>
    <property type="evidence" value="ECO:0007669"/>
    <property type="project" value="UniProtKB-SubCell"/>
</dbReference>
<dbReference type="GO" id="GO:0042552">
    <property type="term" value="P:myelination"/>
    <property type="evidence" value="ECO:0007669"/>
    <property type="project" value="TreeGrafter"/>
</dbReference>
<dbReference type="FunFam" id="2.60.40.10:FF:000193">
    <property type="entry name" value="Myelin protein zero-like 1 like"/>
    <property type="match status" value="1"/>
</dbReference>
<dbReference type="Gene3D" id="2.60.40.10">
    <property type="entry name" value="Immunoglobulins"/>
    <property type="match status" value="1"/>
</dbReference>
<dbReference type="InterPro" id="IPR007110">
    <property type="entry name" value="Ig-like_dom"/>
</dbReference>
<dbReference type="InterPro" id="IPR036179">
    <property type="entry name" value="Ig-like_dom_sf"/>
</dbReference>
<dbReference type="InterPro" id="IPR013783">
    <property type="entry name" value="Ig-like_fold"/>
</dbReference>
<dbReference type="InterPro" id="IPR003599">
    <property type="entry name" value="Ig_sub"/>
</dbReference>
<dbReference type="InterPro" id="IPR013106">
    <property type="entry name" value="Ig_V-set"/>
</dbReference>
<dbReference type="InterPro" id="IPR000920">
    <property type="entry name" value="Myelin_P0-rel"/>
</dbReference>
<dbReference type="InterPro" id="IPR019738">
    <property type="entry name" value="Myelin_P0_CS"/>
</dbReference>
<dbReference type="InterPro" id="IPR019566">
    <property type="entry name" value="MYP0_C"/>
</dbReference>
<dbReference type="PANTHER" id="PTHR13869">
    <property type="entry name" value="MYELIN P0 RELATED"/>
    <property type="match status" value="1"/>
</dbReference>
<dbReference type="PANTHER" id="PTHR13869:SF7">
    <property type="entry name" value="MYELIN PROTEIN P0"/>
    <property type="match status" value="1"/>
</dbReference>
<dbReference type="Pfam" id="PF10570">
    <property type="entry name" value="Myelin-PO_C"/>
    <property type="match status" value="1"/>
</dbReference>
<dbReference type="Pfam" id="PF07686">
    <property type="entry name" value="V-set"/>
    <property type="match status" value="1"/>
</dbReference>
<dbReference type="PRINTS" id="PR00213">
    <property type="entry name" value="MYELINP0"/>
</dbReference>
<dbReference type="SMART" id="SM00409">
    <property type="entry name" value="IG"/>
    <property type="match status" value="1"/>
</dbReference>
<dbReference type="SMART" id="SM00406">
    <property type="entry name" value="IGv"/>
    <property type="match status" value="1"/>
</dbReference>
<dbReference type="SUPFAM" id="SSF48726">
    <property type="entry name" value="Immunoglobulin"/>
    <property type="match status" value="1"/>
</dbReference>
<dbReference type="PROSITE" id="PS50835">
    <property type="entry name" value="IG_LIKE"/>
    <property type="match status" value="1"/>
</dbReference>
<dbReference type="PROSITE" id="PS00568">
    <property type="entry name" value="MYELIN_P0"/>
    <property type="match status" value="1"/>
</dbReference>
<organism>
    <name type="scientific">Heterodontus francisci</name>
    <name type="common">Horn shark</name>
    <name type="synonym">Cestracion francisci</name>
    <dbReference type="NCBI Taxonomy" id="7792"/>
    <lineage>
        <taxon>Eukaryota</taxon>
        <taxon>Metazoa</taxon>
        <taxon>Chordata</taxon>
        <taxon>Craniata</taxon>
        <taxon>Vertebrata</taxon>
        <taxon>Chondrichthyes</taxon>
        <taxon>Elasmobranchii</taxon>
        <taxon>Galeomorphii</taxon>
        <taxon>Heterodontoidea</taxon>
        <taxon>Heterodontiformes</taxon>
        <taxon>Heterodontidae</taxon>
        <taxon>Heterodontus</taxon>
    </lineage>
</organism>
<proteinExistence type="evidence at transcript level"/>
<reference key="1">
    <citation type="journal article" date="1989" name="J. Mol. Evol.">
        <title>The myelin proteins of the shark brain are similar to the myelin proteins of the mammalian peripheral nervous system.</title>
        <authorList>
            <person name="Saavedra R.A."/>
            <person name="Fors L."/>
            <person name="Aebersold R.H."/>
            <person name="Arden B."/>
            <person name="Horvath S."/>
            <person name="Sanders J."/>
            <person name="Hood L."/>
        </authorList>
    </citation>
    <scope>NUCLEOTIDE SEQUENCE [MRNA]</scope>
    <source>
        <tissue>Brain</tissue>
    </source>
</reference>
<evidence type="ECO:0000250" key="1"/>
<evidence type="ECO:0000255" key="2"/>
<evidence type="ECO:0000255" key="3">
    <source>
        <dbReference type="PROSITE-ProRule" id="PRU00114"/>
    </source>
</evidence>
<evidence type="ECO:0000256" key="4">
    <source>
        <dbReference type="SAM" id="MobiDB-lite"/>
    </source>
</evidence>
<evidence type="ECO:0000305" key="5"/>
<keyword id="KW-1003">Cell membrane</keyword>
<keyword id="KW-1015">Disulfide bond</keyword>
<keyword id="KW-0325">Glycoprotein</keyword>
<keyword id="KW-0393">Immunoglobulin domain</keyword>
<keyword id="KW-0472">Membrane</keyword>
<keyword id="KW-0597">Phosphoprotein</keyword>
<keyword id="KW-0732">Signal</keyword>
<keyword id="KW-0812">Transmembrane</keyword>
<keyword id="KW-1133">Transmembrane helix</keyword>
<feature type="signal peptide" evidence="1">
    <location>
        <begin position="1"/>
        <end position="27"/>
    </location>
</feature>
<feature type="chain" id="PRO_0000019304" description="Myelin protein P0">
    <location>
        <begin position="28"/>
        <end position="246"/>
    </location>
</feature>
<feature type="topological domain" description="Extracellular" evidence="2">
    <location>
        <begin position="28"/>
        <end position="150"/>
    </location>
</feature>
<feature type="transmembrane region" description="Helical" evidence="2">
    <location>
        <begin position="151"/>
        <end position="178"/>
    </location>
</feature>
<feature type="topological domain" description="Cytoplasmic" evidence="2">
    <location>
        <begin position="179"/>
        <end position="246"/>
    </location>
</feature>
<feature type="domain" description="Ig-like V-type">
    <location>
        <begin position="28"/>
        <end position="143"/>
    </location>
</feature>
<feature type="region of interest" description="Disordered" evidence="4">
    <location>
        <begin position="200"/>
        <end position="246"/>
    </location>
</feature>
<feature type="compositionally biased region" description="Basic and acidic residues" evidence="4">
    <location>
        <begin position="231"/>
        <end position="246"/>
    </location>
</feature>
<feature type="glycosylation site" description="N-linked (GlcNAc...) (complex) asparagine" evidence="1">
    <location>
        <position position="120"/>
    </location>
</feature>
<feature type="disulfide bond" evidence="3">
    <location>
        <begin position="48"/>
        <end position="125"/>
    </location>
</feature>
<gene>
    <name type="primary">mpz</name>
</gene>
<sequence>MFRDLKPAYLFCCSVLYAFSVLRPSQGISVSTHHNLHKTVGSDVTLYCGFWSNEYVSDLTTLSWRFRPDNSRDIISIFHYGNGVPYIEKWGQFRGRVEWVGDISKHDGSIVIRNLDYIDNGTFTCDVKNPPDVVGTSSDVHLTVYDKIPPVGAGVVSGAIIGTFLGIILLIVGGLYLFRYIVRRRARSETSFLQRRRSAAERGKVSGKAGTVSKGPVLYATLDQSKSGKGASEKKSKLSESKRDKK</sequence>
<accession>P20938</accession>
<comment type="function">
    <text>Creation of an extracellular membrane face which guides the wrapping process and ultimately compacts adjacent lamellae.</text>
</comment>
<comment type="subcellular location">
    <subcellularLocation>
        <location>Cell membrane</location>
        <topology>Single-pass type I membrane protein</topology>
    </subcellularLocation>
</comment>
<comment type="tissue specificity">
    <text>Found only in peripheral nervous system Schwann cells.</text>
</comment>
<comment type="PTM">
    <text evidence="1">N-glycan is sulfated.</text>
</comment>
<comment type="similarity">
    <text evidence="5">Belongs to the myelin P0 protein family.</text>
</comment>
<name>MYP0_HETFR</name>